<name>TUSB_YERPS</name>
<reference key="1">
    <citation type="journal article" date="2004" name="Proc. Natl. Acad. Sci. U.S.A.">
        <title>Insights into the evolution of Yersinia pestis through whole-genome comparison with Yersinia pseudotuberculosis.</title>
        <authorList>
            <person name="Chain P.S.G."/>
            <person name="Carniel E."/>
            <person name="Larimer F.W."/>
            <person name="Lamerdin J."/>
            <person name="Stoutland P.O."/>
            <person name="Regala W.M."/>
            <person name="Georgescu A.M."/>
            <person name="Vergez L.M."/>
            <person name="Land M.L."/>
            <person name="Motin V.L."/>
            <person name="Brubaker R.R."/>
            <person name="Fowler J."/>
            <person name="Hinnebusch J."/>
            <person name="Marceau M."/>
            <person name="Medigue C."/>
            <person name="Simonet M."/>
            <person name="Chenal-Francisque V."/>
            <person name="Souza B."/>
            <person name="Dacheux D."/>
            <person name="Elliott J.M."/>
            <person name="Derbise A."/>
            <person name="Hauser L.J."/>
            <person name="Garcia E."/>
        </authorList>
    </citation>
    <scope>NUCLEOTIDE SEQUENCE [LARGE SCALE GENOMIC DNA]</scope>
    <source>
        <strain>IP32953</strain>
    </source>
</reference>
<feature type="chain" id="PRO_0000234526" description="Protein TusB">
    <location>
        <begin position="1"/>
        <end position="95"/>
    </location>
</feature>
<accession>Q664R3</accession>
<protein>
    <recommendedName>
        <fullName evidence="1">Protein TusB</fullName>
    </recommendedName>
    <alternativeName>
        <fullName evidence="1">tRNA 2-thiouridine synthesizing protein B</fullName>
    </alternativeName>
</protein>
<proteinExistence type="inferred from homology"/>
<gene>
    <name evidence="1" type="primary">tusB</name>
    <name type="ordered locus">YPTB3706</name>
</gene>
<sequence length="95" mass="10577">MLYTVSHSPYHCDLSALLRLATSEDDILLLQDGVIAALKESETLKLLLNNPASLFVLEDDVIARGLVGQISDNATLISYTHFVDLTLRHQQQLAW</sequence>
<comment type="function">
    <text evidence="1">Part of a sulfur-relay system required for 2-thiolation of 5-methylaminomethyl-2-thiouridine (mnm(5)s(2)U) at tRNA wobble positions.</text>
</comment>
<comment type="subunit">
    <text evidence="1">Heterohexamer, formed by a dimer of trimers. The hexameric TusBCD complex contains 2 copies each of TusB, TusC and TusD. The TusBCD complex interacts with TusE.</text>
</comment>
<comment type="subcellular location">
    <subcellularLocation>
        <location evidence="1">Cytoplasm</location>
    </subcellularLocation>
</comment>
<comment type="similarity">
    <text evidence="1">Belongs to the DsrH/TusB family.</text>
</comment>
<evidence type="ECO:0000255" key="1">
    <source>
        <dbReference type="HAMAP-Rule" id="MF_01564"/>
    </source>
</evidence>
<keyword id="KW-0963">Cytoplasm</keyword>
<keyword id="KW-0819">tRNA processing</keyword>
<dbReference type="EMBL" id="BX936398">
    <property type="protein sequence ID" value="CAH22944.1"/>
    <property type="molecule type" value="Genomic_DNA"/>
</dbReference>
<dbReference type="RefSeq" id="WP_002212322.1">
    <property type="nucleotide sequence ID" value="NZ_CP009712.1"/>
</dbReference>
<dbReference type="SMR" id="Q664R3"/>
<dbReference type="GeneID" id="57974404"/>
<dbReference type="KEGG" id="ypo:BZ17_2881"/>
<dbReference type="KEGG" id="yps:YPTB3706"/>
<dbReference type="PATRIC" id="fig|273123.14.peg.3022"/>
<dbReference type="Proteomes" id="UP000001011">
    <property type="component" value="Chromosome"/>
</dbReference>
<dbReference type="GO" id="GO:1990228">
    <property type="term" value="C:sulfurtransferase complex"/>
    <property type="evidence" value="ECO:0007669"/>
    <property type="project" value="TreeGrafter"/>
</dbReference>
<dbReference type="GO" id="GO:0002143">
    <property type="term" value="P:tRNA wobble position uridine thiolation"/>
    <property type="evidence" value="ECO:0007669"/>
    <property type="project" value="InterPro"/>
</dbReference>
<dbReference type="FunFam" id="3.40.1260.10:FF:000002">
    <property type="entry name" value="Sulfurtransferase TusB"/>
    <property type="match status" value="1"/>
</dbReference>
<dbReference type="Gene3D" id="3.40.1260.10">
    <property type="entry name" value="DsrEFH-like"/>
    <property type="match status" value="1"/>
</dbReference>
<dbReference type="HAMAP" id="MF_01564">
    <property type="entry name" value="Thiourid_synth_B"/>
    <property type="match status" value="1"/>
</dbReference>
<dbReference type="InterPro" id="IPR027396">
    <property type="entry name" value="DsrEFH-like"/>
</dbReference>
<dbReference type="InterPro" id="IPR023526">
    <property type="entry name" value="Sulphur_relay_TusB"/>
</dbReference>
<dbReference type="InterPro" id="IPR007215">
    <property type="entry name" value="Sulphur_relay_TusB/DsrH"/>
</dbReference>
<dbReference type="NCBIfam" id="NF010035">
    <property type="entry name" value="PRK13510.1"/>
    <property type="match status" value="1"/>
</dbReference>
<dbReference type="NCBIfam" id="TIGR03011">
    <property type="entry name" value="sulf_tusB_dsrH"/>
    <property type="match status" value="1"/>
</dbReference>
<dbReference type="PANTHER" id="PTHR37526">
    <property type="entry name" value="PROTEIN TUSB"/>
    <property type="match status" value="1"/>
</dbReference>
<dbReference type="PANTHER" id="PTHR37526:SF1">
    <property type="entry name" value="PROTEIN TUSB"/>
    <property type="match status" value="1"/>
</dbReference>
<dbReference type="Pfam" id="PF04077">
    <property type="entry name" value="DsrH"/>
    <property type="match status" value="1"/>
</dbReference>
<dbReference type="SUPFAM" id="SSF75169">
    <property type="entry name" value="DsrEFH-like"/>
    <property type="match status" value="1"/>
</dbReference>
<organism>
    <name type="scientific">Yersinia pseudotuberculosis serotype I (strain IP32953)</name>
    <dbReference type="NCBI Taxonomy" id="273123"/>
    <lineage>
        <taxon>Bacteria</taxon>
        <taxon>Pseudomonadati</taxon>
        <taxon>Pseudomonadota</taxon>
        <taxon>Gammaproteobacteria</taxon>
        <taxon>Enterobacterales</taxon>
        <taxon>Yersiniaceae</taxon>
        <taxon>Yersinia</taxon>
    </lineage>
</organism>